<protein>
    <recommendedName>
        <fullName evidence="1">Elongation factor 4</fullName>
        <shortName evidence="1">EF-4</shortName>
        <ecNumber evidence="1">3.6.5.n1</ecNumber>
    </recommendedName>
    <alternativeName>
        <fullName evidence="1">Ribosomal back-translocase LepA</fullName>
    </alternativeName>
</protein>
<reference key="1">
    <citation type="journal article" date="2000" name="DNA Res.">
        <title>Complete genome structure of the nitrogen-fixing symbiotic bacterium Mesorhizobium loti.</title>
        <authorList>
            <person name="Kaneko T."/>
            <person name="Nakamura Y."/>
            <person name="Sato S."/>
            <person name="Asamizu E."/>
            <person name="Kato T."/>
            <person name="Sasamoto S."/>
            <person name="Watanabe A."/>
            <person name="Idesawa K."/>
            <person name="Ishikawa A."/>
            <person name="Kawashima K."/>
            <person name="Kimura T."/>
            <person name="Kishida Y."/>
            <person name="Kiyokawa C."/>
            <person name="Kohara M."/>
            <person name="Matsumoto M."/>
            <person name="Matsuno A."/>
            <person name="Mochizuki Y."/>
            <person name="Nakayama S."/>
            <person name="Nakazaki N."/>
            <person name="Shimpo S."/>
            <person name="Sugimoto M."/>
            <person name="Takeuchi C."/>
            <person name="Yamada M."/>
            <person name="Tabata S."/>
        </authorList>
    </citation>
    <scope>NUCLEOTIDE SEQUENCE [LARGE SCALE GENOMIC DNA]</scope>
    <source>
        <strain>LMG 29417 / CECT 9101 / MAFF 303099</strain>
    </source>
</reference>
<name>LEPA_RHILO</name>
<gene>
    <name evidence="1" type="primary">lepA</name>
    <name type="ordered locus">mlr4536</name>
</gene>
<organism>
    <name type="scientific">Mesorhizobium japonicum (strain LMG 29417 / CECT 9101 / MAFF 303099)</name>
    <name type="common">Mesorhizobium loti (strain MAFF 303099)</name>
    <dbReference type="NCBI Taxonomy" id="266835"/>
    <lineage>
        <taxon>Bacteria</taxon>
        <taxon>Pseudomonadati</taxon>
        <taxon>Pseudomonadota</taxon>
        <taxon>Alphaproteobacteria</taxon>
        <taxon>Hyphomicrobiales</taxon>
        <taxon>Phyllobacteriaceae</taxon>
        <taxon>Mesorhizobium</taxon>
    </lineage>
</organism>
<proteinExistence type="inferred from homology"/>
<feature type="chain" id="PRO_0000176328" description="Elongation factor 4">
    <location>
        <begin position="1"/>
        <end position="601"/>
    </location>
</feature>
<feature type="domain" description="tr-type G">
    <location>
        <begin position="6"/>
        <end position="188"/>
    </location>
</feature>
<feature type="binding site" evidence="1">
    <location>
        <begin position="18"/>
        <end position="23"/>
    </location>
    <ligand>
        <name>GTP</name>
        <dbReference type="ChEBI" id="CHEBI:37565"/>
    </ligand>
</feature>
<feature type="binding site" evidence="1">
    <location>
        <begin position="135"/>
        <end position="138"/>
    </location>
    <ligand>
        <name>GTP</name>
        <dbReference type="ChEBI" id="CHEBI:37565"/>
    </ligand>
</feature>
<comment type="function">
    <text evidence="1">Required for accurate and efficient protein synthesis under certain stress conditions. May act as a fidelity factor of the translation reaction, by catalyzing a one-codon backward translocation of tRNAs on improperly translocated ribosomes. Back-translocation proceeds from a post-translocation (POST) complex to a pre-translocation (PRE) complex, thus giving elongation factor G a second chance to translocate the tRNAs correctly. Binds to ribosomes in a GTP-dependent manner.</text>
</comment>
<comment type="catalytic activity">
    <reaction evidence="1">
        <text>GTP + H2O = GDP + phosphate + H(+)</text>
        <dbReference type="Rhea" id="RHEA:19669"/>
        <dbReference type="ChEBI" id="CHEBI:15377"/>
        <dbReference type="ChEBI" id="CHEBI:15378"/>
        <dbReference type="ChEBI" id="CHEBI:37565"/>
        <dbReference type="ChEBI" id="CHEBI:43474"/>
        <dbReference type="ChEBI" id="CHEBI:58189"/>
        <dbReference type="EC" id="3.6.5.n1"/>
    </reaction>
</comment>
<comment type="subcellular location">
    <subcellularLocation>
        <location evidence="1">Cell inner membrane</location>
        <topology evidence="1">Peripheral membrane protein</topology>
        <orientation evidence="1">Cytoplasmic side</orientation>
    </subcellularLocation>
</comment>
<comment type="similarity">
    <text evidence="1">Belongs to the TRAFAC class translation factor GTPase superfamily. Classic translation factor GTPase family. LepA subfamily.</text>
</comment>
<sequence>MSTPLDHIRNFSIVAHIDHGKSTLADRLIQSTGGLELRDMKEQVLDSMDIERERGITIKAQTVRLKYRANNGEDYILNLIDTPGHVDFAYEVSRSLAACEGSLLVVDASQGVEAQTLANVYQAIDNNHEIVVVLNKVDLPAAEPERIREQVEEVIGIDASGAVLISAKTGLGIPDVLEAIVHQLPPPREGDATAPLKAMLVDSWYDAYLGVIVLVRIIDGVLKKGQTIRMMGTGAKYLVERTGVFTPARINVDELGPGEFGFFTGSIKEVADTRVGDTITEDKRPTAQALPGFKPAQPVVFCGLFPVDAADFEDLRAAVGKLRLNDASFSYEMETSAALGFGYRCGFLGLLHLEIIQERLEREFNLDLIATAPSVVYRLLLNDGSVKELHNPADMPDVVKISAIEEPWIRATILTPDDYLGGILKLCQDRRGIQADLSYVGKRAMLTYDLPLNEVVFDFYDRLKSISKGYASFDYHLTDYREGDLVKMSILVNEEPVDALSMLVHRTAAEKRGRQMCEKLKELIPHHLFKIPIQAAIGGKVIARETISALRKDVTAKCYGGDVSRKRKLLDKQKEGKKRMRQFGKVDIPQEAFIQALKMGD</sequence>
<keyword id="KW-0997">Cell inner membrane</keyword>
<keyword id="KW-1003">Cell membrane</keyword>
<keyword id="KW-0342">GTP-binding</keyword>
<keyword id="KW-0378">Hydrolase</keyword>
<keyword id="KW-0472">Membrane</keyword>
<keyword id="KW-0547">Nucleotide-binding</keyword>
<keyword id="KW-0648">Protein biosynthesis</keyword>
<dbReference type="EC" id="3.6.5.n1" evidence="1"/>
<dbReference type="EMBL" id="BA000012">
    <property type="protein sequence ID" value="BAB51169.1"/>
    <property type="molecule type" value="Genomic_DNA"/>
</dbReference>
<dbReference type="RefSeq" id="WP_010912511.1">
    <property type="nucleotide sequence ID" value="NC_002678.2"/>
</dbReference>
<dbReference type="SMR" id="Q98DV1"/>
<dbReference type="KEGG" id="mlo:mlr4536"/>
<dbReference type="PATRIC" id="fig|266835.9.peg.3583"/>
<dbReference type="eggNOG" id="COG0481">
    <property type="taxonomic scope" value="Bacteria"/>
</dbReference>
<dbReference type="HOGENOM" id="CLU_009995_3_3_5"/>
<dbReference type="Proteomes" id="UP000000552">
    <property type="component" value="Chromosome"/>
</dbReference>
<dbReference type="GO" id="GO:0005886">
    <property type="term" value="C:plasma membrane"/>
    <property type="evidence" value="ECO:0007669"/>
    <property type="project" value="UniProtKB-SubCell"/>
</dbReference>
<dbReference type="GO" id="GO:0005525">
    <property type="term" value="F:GTP binding"/>
    <property type="evidence" value="ECO:0007669"/>
    <property type="project" value="UniProtKB-UniRule"/>
</dbReference>
<dbReference type="GO" id="GO:0003924">
    <property type="term" value="F:GTPase activity"/>
    <property type="evidence" value="ECO:0007669"/>
    <property type="project" value="UniProtKB-UniRule"/>
</dbReference>
<dbReference type="GO" id="GO:0097216">
    <property type="term" value="F:guanosine tetraphosphate binding"/>
    <property type="evidence" value="ECO:0007669"/>
    <property type="project" value="UniProtKB-ARBA"/>
</dbReference>
<dbReference type="GO" id="GO:0043022">
    <property type="term" value="F:ribosome binding"/>
    <property type="evidence" value="ECO:0007669"/>
    <property type="project" value="UniProtKB-UniRule"/>
</dbReference>
<dbReference type="GO" id="GO:0003746">
    <property type="term" value="F:translation elongation factor activity"/>
    <property type="evidence" value="ECO:0007669"/>
    <property type="project" value="UniProtKB-UniRule"/>
</dbReference>
<dbReference type="GO" id="GO:0045727">
    <property type="term" value="P:positive regulation of translation"/>
    <property type="evidence" value="ECO:0007669"/>
    <property type="project" value="UniProtKB-UniRule"/>
</dbReference>
<dbReference type="CDD" id="cd03699">
    <property type="entry name" value="EF4_II"/>
    <property type="match status" value="1"/>
</dbReference>
<dbReference type="CDD" id="cd16260">
    <property type="entry name" value="EF4_III"/>
    <property type="match status" value="1"/>
</dbReference>
<dbReference type="CDD" id="cd01890">
    <property type="entry name" value="LepA"/>
    <property type="match status" value="1"/>
</dbReference>
<dbReference type="CDD" id="cd03709">
    <property type="entry name" value="lepA_C"/>
    <property type="match status" value="1"/>
</dbReference>
<dbReference type="FunFam" id="3.40.50.300:FF:000078">
    <property type="entry name" value="Elongation factor 4"/>
    <property type="match status" value="1"/>
</dbReference>
<dbReference type="FunFam" id="2.40.30.10:FF:000015">
    <property type="entry name" value="Translation factor GUF1, mitochondrial"/>
    <property type="match status" value="1"/>
</dbReference>
<dbReference type="FunFam" id="3.30.70.240:FF:000007">
    <property type="entry name" value="Translation factor GUF1, mitochondrial"/>
    <property type="match status" value="1"/>
</dbReference>
<dbReference type="FunFam" id="3.30.70.2570:FF:000001">
    <property type="entry name" value="Translation factor GUF1, mitochondrial"/>
    <property type="match status" value="1"/>
</dbReference>
<dbReference type="FunFam" id="3.30.70.870:FF:000004">
    <property type="entry name" value="Translation factor GUF1, mitochondrial"/>
    <property type="match status" value="1"/>
</dbReference>
<dbReference type="Gene3D" id="3.30.70.240">
    <property type="match status" value="1"/>
</dbReference>
<dbReference type="Gene3D" id="3.30.70.2570">
    <property type="entry name" value="Elongation factor 4, C-terminal domain"/>
    <property type="match status" value="1"/>
</dbReference>
<dbReference type="Gene3D" id="3.30.70.870">
    <property type="entry name" value="Elongation Factor G (Translational Gtpase), domain 3"/>
    <property type="match status" value="1"/>
</dbReference>
<dbReference type="Gene3D" id="3.40.50.300">
    <property type="entry name" value="P-loop containing nucleotide triphosphate hydrolases"/>
    <property type="match status" value="1"/>
</dbReference>
<dbReference type="Gene3D" id="2.40.30.10">
    <property type="entry name" value="Translation factors"/>
    <property type="match status" value="1"/>
</dbReference>
<dbReference type="HAMAP" id="MF_00071">
    <property type="entry name" value="LepA"/>
    <property type="match status" value="1"/>
</dbReference>
<dbReference type="InterPro" id="IPR006297">
    <property type="entry name" value="EF-4"/>
</dbReference>
<dbReference type="InterPro" id="IPR035647">
    <property type="entry name" value="EFG_III/V"/>
</dbReference>
<dbReference type="InterPro" id="IPR000640">
    <property type="entry name" value="EFG_V-like"/>
</dbReference>
<dbReference type="InterPro" id="IPR004161">
    <property type="entry name" value="EFTu-like_2"/>
</dbReference>
<dbReference type="InterPro" id="IPR031157">
    <property type="entry name" value="G_TR_CS"/>
</dbReference>
<dbReference type="InterPro" id="IPR038363">
    <property type="entry name" value="LepA_C_sf"/>
</dbReference>
<dbReference type="InterPro" id="IPR013842">
    <property type="entry name" value="LepA_CTD"/>
</dbReference>
<dbReference type="InterPro" id="IPR035654">
    <property type="entry name" value="LepA_IV"/>
</dbReference>
<dbReference type="InterPro" id="IPR027417">
    <property type="entry name" value="P-loop_NTPase"/>
</dbReference>
<dbReference type="InterPro" id="IPR005225">
    <property type="entry name" value="Small_GTP-bd"/>
</dbReference>
<dbReference type="InterPro" id="IPR000795">
    <property type="entry name" value="T_Tr_GTP-bd_dom"/>
</dbReference>
<dbReference type="NCBIfam" id="TIGR01393">
    <property type="entry name" value="lepA"/>
    <property type="match status" value="1"/>
</dbReference>
<dbReference type="NCBIfam" id="TIGR00231">
    <property type="entry name" value="small_GTP"/>
    <property type="match status" value="1"/>
</dbReference>
<dbReference type="PANTHER" id="PTHR43512:SF4">
    <property type="entry name" value="TRANSLATION FACTOR GUF1 HOMOLOG, CHLOROPLASTIC"/>
    <property type="match status" value="1"/>
</dbReference>
<dbReference type="PANTHER" id="PTHR43512">
    <property type="entry name" value="TRANSLATION FACTOR GUF1-RELATED"/>
    <property type="match status" value="1"/>
</dbReference>
<dbReference type="Pfam" id="PF00679">
    <property type="entry name" value="EFG_C"/>
    <property type="match status" value="1"/>
</dbReference>
<dbReference type="Pfam" id="PF00009">
    <property type="entry name" value="GTP_EFTU"/>
    <property type="match status" value="1"/>
</dbReference>
<dbReference type="Pfam" id="PF03144">
    <property type="entry name" value="GTP_EFTU_D2"/>
    <property type="match status" value="1"/>
</dbReference>
<dbReference type="Pfam" id="PF06421">
    <property type="entry name" value="LepA_C"/>
    <property type="match status" value="1"/>
</dbReference>
<dbReference type="PRINTS" id="PR00315">
    <property type="entry name" value="ELONGATNFCT"/>
</dbReference>
<dbReference type="SUPFAM" id="SSF54980">
    <property type="entry name" value="EF-G C-terminal domain-like"/>
    <property type="match status" value="2"/>
</dbReference>
<dbReference type="SUPFAM" id="SSF52540">
    <property type="entry name" value="P-loop containing nucleoside triphosphate hydrolases"/>
    <property type="match status" value="1"/>
</dbReference>
<dbReference type="PROSITE" id="PS00301">
    <property type="entry name" value="G_TR_1"/>
    <property type="match status" value="1"/>
</dbReference>
<dbReference type="PROSITE" id="PS51722">
    <property type="entry name" value="G_TR_2"/>
    <property type="match status" value="1"/>
</dbReference>
<evidence type="ECO:0000255" key="1">
    <source>
        <dbReference type="HAMAP-Rule" id="MF_00071"/>
    </source>
</evidence>
<accession>Q98DV1</accession>